<accession>P0CV38</accession>
<keyword id="KW-0325">Glycoprotein</keyword>
<keyword id="KW-1048">Host nucleus</keyword>
<keyword id="KW-0964">Secreted</keyword>
<keyword id="KW-0732">Signal</keyword>
<keyword id="KW-0843">Virulence</keyword>
<sequence>MRYLLLTFFTFHCQMVADALPRAKRLRLLREAKARKESGEGKIEEAGMIVTTGAPTPENETMEHNEVPQSTTDTDQKSEEIVEKIAQVQEEGANTEDESDEELLNLAPKRANWDMERDIAPMLRKLERRTQHAIVEILRTCDLKQ</sequence>
<feature type="signal peptide" evidence="1">
    <location>
        <begin position="1"/>
        <end position="19"/>
    </location>
</feature>
<feature type="chain" id="PRO_0000447947" description="Secreted RxLR effector protein 100">
    <location>
        <begin position="20"/>
        <end position="145"/>
    </location>
</feature>
<feature type="region of interest" description="Disordered" evidence="3">
    <location>
        <begin position="38"/>
        <end position="77"/>
    </location>
</feature>
<feature type="short sequence motif" description="RxLR" evidence="7">
    <location>
        <begin position="27"/>
        <end position="30"/>
    </location>
</feature>
<feature type="glycosylation site" description="N-linked (GlcNAc...) asparagine" evidence="2">
    <location>
        <position position="59"/>
    </location>
</feature>
<gene>
    <name evidence="5" type="primary">RXLR100</name>
</gene>
<reference key="1">
    <citation type="journal article" date="2018" name="Front. Plant Sci.">
        <title>In planta functional analysis and subcellular localization of the oomycete pathogen Plasmopara viticola candidate RXLR effector repertoire.</title>
        <authorList>
            <person name="Liu Y."/>
            <person name="Lan X."/>
            <person name="Song S."/>
            <person name="Yin L."/>
            <person name="Dry I.B."/>
            <person name="Qu J."/>
            <person name="Xiang J."/>
            <person name="Lu J."/>
        </authorList>
    </citation>
    <scope>NUCLEOTIDE SEQUENCE [MRNA]</scope>
    <scope>DOMAIN</scope>
    <scope>FUNCTION</scope>
    <scope>SUBCELLULAR LOCATION</scope>
</reference>
<name>RL100_PLAVT</name>
<organism>
    <name type="scientific">Plasmopara viticola</name>
    <name type="common">Downy mildew of grapevine</name>
    <name type="synonym">Botrytis viticola</name>
    <dbReference type="NCBI Taxonomy" id="143451"/>
    <lineage>
        <taxon>Eukaryota</taxon>
        <taxon>Sar</taxon>
        <taxon>Stramenopiles</taxon>
        <taxon>Oomycota</taxon>
        <taxon>Peronosporales</taxon>
        <taxon>Peronosporaceae</taxon>
        <taxon>Plasmopara</taxon>
    </lineage>
</organism>
<proteinExistence type="evidence at transcript level"/>
<evidence type="ECO:0000255" key="1"/>
<evidence type="ECO:0000255" key="2">
    <source>
        <dbReference type="PROSITE-ProRule" id="PRU00498"/>
    </source>
</evidence>
<evidence type="ECO:0000256" key="3">
    <source>
        <dbReference type="SAM" id="MobiDB-lite"/>
    </source>
</evidence>
<evidence type="ECO:0000269" key="4">
    <source>
    </source>
</evidence>
<evidence type="ECO:0000303" key="5">
    <source>
    </source>
</evidence>
<evidence type="ECO:0000305" key="6"/>
<evidence type="ECO:0000305" key="7">
    <source>
    </source>
</evidence>
<comment type="function">
    <text evidence="4">Secreted effector that dos not suppress the host cell death induced by cell death-inducing proteins.</text>
</comment>
<comment type="subcellular location">
    <subcellularLocation>
        <location evidence="4">Secreted</location>
    </subcellularLocation>
    <subcellularLocation>
        <location evidence="4">Host nucleus</location>
    </subcellularLocation>
</comment>
<comment type="domain">
    <text evidence="7">Has the canonical translocation RxLR motif, but lacks the canonical EER motif, which characterizes most oomycete effectors identified so far.</text>
</comment>
<comment type="similarity">
    <text evidence="6">Belongs to the RxLR effector family.</text>
</comment>
<dbReference type="SMR" id="P0CV38"/>
<dbReference type="GlyCosmos" id="P0CV38">
    <property type="glycosylation" value="1 site, No reported glycans"/>
</dbReference>
<dbReference type="GO" id="GO:0005576">
    <property type="term" value="C:extracellular region"/>
    <property type="evidence" value="ECO:0007669"/>
    <property type="project" value="UniProtKB-SubCell"/>
</dbReference>
<dbReference type="GO" id="GO:0042025">
    <property type="term" value="C:host cell nucleus"/>
    <property type="evidence" value="ECO:0007669"/>
    <property type="project" value="UniProtKB-SubCell"/>
</dbReference>
<dbReference type="GO" id="GO:0071014">
    <property type="term" value="C:post-mRNA release spliceosomal complex"/>
    <property type="evidence" value="ECO:0007669"/>
    <property type="project" value="TreeGrafter"/>
</dbReference>
<dbReference type="GO" id="GO:0005684">
    <property type="term" value="C:U2-type spliceosomal complex"/>
    <property type="evidence" value="ECO:0007669"/>
    <property type="project" value="TreeGrafter"/>
</dbReference>
<dbReference type="InterPro" id="IPR013169">
    <property type="entry name" value="mRNA_splic_Cwf18-like"/>
</dbReference>
<dbReference type="PANTHER" id="PTHR31551:SF1">
    <property type="entry name" value="COILED-COIL DOMAIN-CONTAINING PROTEIN 12"/>
    <property type="match status" value="1"/>
</dbReference>
<dbReference type="PANTHER" id="PTHR31551">
    <property type="entry name" value="PRE-MRNA-SPLICING FACTOR CWF18"/>
    <property type="match status" value="1"/>
</dbReference>
<dbReference type="Pfam" id="PF08315">
    <property type="entry name" value="cwf18"/>
    <property type="match status" value="1"/>
</dbReference>
<protein>
    <recommendedName>
        <fullName evidence="5">Secreted RxLR effector protein 100</fullName>
    </recommendedName>
</protein>